<protein>
    <recommendedName>
        <fullName>Bromodomain testis-specific protein</fullName>
    </recommendedName>
</protein>
<gene>
    <name type="primary">brdt</name>
    <name type="synonym">si:dkeyp-85h7.3</name>
</gene>
<reference key="1">
    <citation type="journal article" date="2013" name="Nature">
        <title>The zebrafish reference genome sequence and its relationship to the human genome.</title>
        <authorList>
            <person name="Howe K."/>
            <person name="Clark M.D."/>
            <person name="Torroja C.F."/>
            <person name="Torrance J."/>
            <person name="Berthelot C."/>
            <person name="Muffato M."/>
            <person name="Collins J.E."/>
            <person name="Humphray S."/>
            <person name="McLaren K."/>
            <person name="Matthews L."/>
            <person name="McLaren S."/>
            <person name="Sealy I."/>
            <person name="Caccamo M."/>
            <person name="Churcher C."/>
            <person name="Scott C."/>
            <person name="Barrett J.C."/>
            <person name="Koch R."/>
            <person name="Rauch G.J."/>
            <person name="White S."/>
            <person name="Chow W."/>
            <person name="Kilian B."/>
            <person name="Quintais L.T."/>
            <person name="Guerra-Assuncao J.A."/>
            <person name="Zhou Y."/>
            <person name="Gu Y."/>
            <person name="Yen J."/>
            <person name="Vogel J.H."/>
            <person name="Eyre T."/>
            <person name="Redmond S."/>
            <person name="Banerjee R."/>
            <person name="Chi J."/>
            <person name="Fu B."/>
            <person name="Langley E."/>
            <person name="Maguire S.F."/>
            <person name="Laird G.K."/>
            <person name="Lloyd D."/>
            <person name="Kenyon E."/>
            <person name="Donaldson S."/>
            <person name="Sehra H."/>
            <person name="Almeida-King J."/>
            <person name="Loveland J."/>
            <person name="Trevanion S."/>
            <person name="Jones M."/>
            <person name="Quail M."/>
            <person name="Willey D."/>
            <person name="Hunt A."/>
            <person name="Burton J."/>
            <person name="Sims S."/>
            <person name="McLay K."/>
            <person name="Plumb B."/>
            <person name="Davis J."/>
            <person name="Clee C."/>
            <person name="Oliver K."/>
            <person name="Clark R."/>
            <person name="Riddle C."/>
            <person name="Elliot D."/>
            <person name="Threadgold G."/>
            <person name="Harden G."/>
            <person name="Ware D."/>
            <person name="Begum S."/>
            <person name="Mortimore B."/>
            <person name="Kerry G."/>
            <person name="Heath P."/>
            <person name="Phillimore B."/>
            <person name="Tracey A."/>
            <person name="Corby N."/>
            <person name="Dunn M."/>
            <person name="Johnson C."/>
            <person name="Wood J."/>
            <person name="Clark S."/>
            <person name="Pelan S."/>
            <person name="Griffiths G."/>
            <person name="Smith M."/>
            <person name="Glithero R."/>
            <person name="Howden P."/>
            <person name="Barker N."/>
            <person name="Lloyd C."/>
            <person name="Stevens C."/>
            <person name="Harley J."/>
            <person name="Holt K."/>
            <person name="Panagiotidis G."/>
            <person name="Lovell J."/>
            <person name="Beasley H."/>
            <person name="Henderson C."/>
            <person name="Gordon D."/>
            <person name="Auger K."/>
            <person name="Wright D."/>
            <person name="Collins J."/>
            <person name="Raisen C."/>
            <person name="Dyer L."/>
            <person name="Leung K."/>
            <person name="Robertson L."/>
            <person name="Ambridge K."/>
            <person name="Leongamornlert D."/>
            <person name="McGuire S."/>
            <person name="Gilderthorp R."/>
            <person name="Griffiths C."/>
            <person name="Manthravadi D."/>
            <person name="Nichol S."/>
            <person name="Barker G."/>
            <person name="Whitehead S."/>
            <person name="Kay M."/>
            <person name="Brown J."/>
            <person name="Murnane C."/>
            <person name="Gray E."/>
            <person name="Humphries M."/>
            <person name="Sycamore N."/>
            <person name="Barker D."/>
            <person name="Saunders D."/>
            <person name="Wallis J."/>
            <person name="Babbage A."/>
            <person name="Hammond S."/>
            <person name="Mashreghi-Mohammadi M."/>
            <person name="Barr L."/>
            <person name="Martin S."/>
            <person name="Wray P."/>
            <person name="Ellington A."/>
            <person name="Matthews N."/>
            <person name="Ellwood M."/>
            <person name="Woodmansey R."/>
            <person name="Clark G."/>
            <person name="Cooper J."/>
            <person name="Tromans A."/>
            <person name="Grafham D."/>
            <person name="Skuce C."/>
            <person name="Pandian R."/>
            <person name="Andrews R."/>
            <person name="Harrison E."/>
            <person name="Kimberley A."/>
            <person name="Garnett J."/>
            <person name="Fosker N."/>
            <person name="Hall R."/>
            <person name="Garner P."/>
            <person name="Kelly D."/>
            <person name="Bird C."/>
            <person name="Palmer S."/>
            <person name="Gehring I."/>
            <person name="Berger A."/>
            <person name="Dooley C.M."/>
            <person name="Ersan-Urun Z."/>
            <person name="Eser C."/>
            <person name="Geiger H."/>
            <person name="Geisler M."/>
            <person name="Karotki L."/>
            <person name="Kirn A."/>
            <person name="Konantz J."/>
            <person name="Konantz M."/>
            <person name="Oberlander M."/>
            <person name="Rudolph-Geiger S."/>
            <person name="Teucke M."/>
            <person name="Lanz C."/>
            <person name="Raddatz G."/>
            <person name="Osoegawa K."/>
            <person name="Zhu B."/>
            <person name="Rapp A."/>
            <person name="Widaa S."/>
            <person name="Langford C."/>
            <person name="Yang F."/>
            <person name="Schuster S.C."/>
            <person name="Carter N.P."/>
            <person name="Harrow J."/>
            <person name="Ning Z."/>
            <person name="Herrero J."/>
            <person name="Searle S.M."/>
            <person name="Enright A."/>
            <person name="Geisler R."/>
            <person name="Plasterk R.H."/>
            <person name="Lee C."/>
            <person name="Westerfield M."/>
            <person name="de Jong P.J."/>
            <person name="Zon L.I."/>
            <person name="Postlethwait J.H."/>
            <person name="Nusslein-Volhard C."/>
            <person name="Hubbard T.J."/>
            <person name="Roest Crollius H."/>
            <person name="Rogers J."/>
            <person name="Stemple D.L."/>
        </authorList>
    </citation>
    <scope>NUCLEOTIDE SEQUENCE [LARGE SCALE GENOMIC DNA]</scope>
    <source>
        <strain>Tuebingen</strain>
    </source>
</reference>
<evidence type="ECO:0000250" key="1">
    <source>
        <dbReference type="UniProtKB" id="Q58F21"/>
    </source>
</evidence>
<evidence type="ECO:0000250" key="2">
    <source>
        <dbReference type="UniProtKB" id="Q91Y44"/>
    </source>
</evidence>
<evidence type="ECO:0000255" key="3"/>
<evidence type="ECO:0000255" key="4">
    <source>
        <dbReference type="PROSITE-ProRule" id="PRU00035"/>
    </source>
</evidence>
<evidence type="ECO:0000255" key="5">
    <source>
        <dbReference type="PROSITE-ProRule" id="PRU00857"/>
    </source>
</evidence>
<evidence type="ECO:0000256" key="6">
    <source>
        <dbReference type="SAM" id="MobiDB-lite"/>
    </source>
</evidence>
<evidence type="ECO:0000305" key="7"/>
<dbReference type="EMBL" id="BX927081">
    <property type="status" value="NOT_ANNOTATED_CDS"/>
    <property type="molecule type" value="Genomic_DNA"/>
</dbReference>
<dbReference type="SMR" id="F1QW93"/>
<dbReference type="FunCoup" id="F1QW93">
    <property type="interactions" value="475"/>
</dbReference>
<dbReference type="STRING" id="7955.ENSDARP00000130622"/>
<dbReference type="InParanoid" id="F1QW93"/>
<dbReference type="OrthoDB" id="6501837at2759"/>
<dbReference type="Proteomes" id="UP000000437">
    <property type="component" value="Unplaced"/>
</dbReference>
<dbReference type="GO" id="GO:0005634">
    <property type="term" value="C:nucleus"/>
    <property type="evidence" value="ECO:0000250"/>
    <property type="project" value="UniProtKB"/>
</dbReference>
<dbReference type="GO" id="GO:0007141">
    <property type="term" value="P:male meiosis I"/>
    <property type="evidence" value="ECO:0000250"/>
    <property type="project" value="UniProtKB"/>
</dbReference>
<dbReference type="GO" id="GO:0007140">
    <property type="term" value="P:male meiotic nuclear division"/>
    <property type="evidence" value="ECO:0000250"/>
    <property type="project" value="UniProtKB"/>
</dbReference>
<dbReference type="GO" id="GO:0010628">
    <property type="term" value="P:positive regulation of gene expression"/>
    <property type="evidence" value="ECO:0000250"/>
    <property type="project" value="UniProtKB"/>
</dbReference>
<dbReference type="GO" id="GO:0043484">
    <property type="term" value="P:regulation of RNA splicing"/>
    <property type="evidence" value="ECO:0000250"/>
    <property type="project" value="UniProtKB"/>
</dbReference>
<dbReference type="GO" id="GO:0035092">
    <property type="term" value="P:sperm DNA condensation"/>
    <property type="evidence" value="ECO:0000250"/>
    <property type="project" value="UniProtKB"/>
</dbReference>
<dbReference type="CDD" id="cd05497">
    <property type="entry name" value="Bromo_Brdt_I_like"/>
    <property type="match status" value="1"/>
</dbReference>
<dbReference type="CDD" id="cd05498">
    <property type="entry name" value="Bromo_Brdt_II_like"/>
    <property type="match status" value="1"/>
</dbReference>
<dbReference type="FunFam" id="1.20.920.10:FF:000003">
    <property type="entry name" value="Bromodomain-containing protein 2"/>
    <property type="match status" value="1"/>
</dbReference>
<dbReference type="FunFam" id="1.20.1270.220:FF:000001">
    <property type="entry name" value="bromodomain-containing protein 2 isoform X1"/>
    <property type="match status" value="1"/>
</dbReference>
<dbReference type="FunFam" id="1.20.920.10:FF:000002">
    <property type="entry name" value="Bromodomain-containing protein 4"/>
    <property type="match status" value="1"/>
</dbReference>
<dbReference type="Gene3D" id="1.20.1270.220">
    <property type="match status" value="1"/>
</dbReference>
<dbReference type="Gene3D" id="1.20.920.10">
    <property type="entry name" value="Bromodomain-like"/>
    <property type="match status" value="2"/>
</dbReference>
<dbReference type="InterPro" id="IPR031354">
    <property type="entry name" value="BRD4_CDT"/>
</dbReference>
<dbReference type="InterPro" id="IPR043508">
    <property type="entry name" value="Bromo_Brdt_I"/>
</dbReference>
<dbReference type="InterPro" id="IPR043509">
    <property type="entry name" value="Bromo_Brdt_II"/>
</dbReference>
<dbReference type="InterPro" id="IPR050935">
    <property type="entry name" value="Bromo_chromatin_reader"/>
</dbReference>
<dbReference type="InterPro" id="IPR001487">
    <property type="entry name" value="Bromodomain"/>
</dbReference>
<dbReference type="InterPro" id="IPR036427">
    <property type="entry name" value="Bromodomain-like_sf"/>
</dbReference>
<dbReference type="InterPro" id="IPR018359">
    <property type="entry name" value="Bromodomain_CS"/>
</dbReference>
<dbReference type="InterPro" id="IPR027353">
    <property type="entry name" value="NET_dom"/>
</dbReference>
<dbReference type="InterPro" id="IPR038336">
    <property type="entry name" value="NET_sf"/>
</dbReference>
<dbReference type="PANTHER" id="PTHR22880:SF143">
    <property type="entry name" value="BROMODOMAIN-CONTAINING PROTEIN 4"/>
    <property type="match status" value="1"/>
</dbReference>
<dbReference type="PANTHER" id="PTHR22880">
    <property type="entry name" value="FALZ-RELATED BROMODOMAIN-CONTAINING PROTEINS"/>
    <property type="match status" value="1"/>
</dbReference>
<dbReference type="Pfam" id="PF17035">
    <property type="entry name" value="BET"/>
    <property type="match status" value="1"/>
</dbReference>
<dbReference type="Pfam" id="PF17105">
    <property type="entry name" value="BRD4_CDT"/>
    <property type="match status" value="1"/>
</dbReference>
<dbReference type="Pfam" id="PF00439">
    <property type="entry name" value="Bromodomain"/>
    <property type="match status" value="2"/>
</dbReference>
<dbReference type="PRINTS" id="PR00503">
    <property type="entry name" value="BROMODOMAIN"/>
</dbReference>
<dbReference type="SMART" id="SM00297">
    <property type="entry name" value="BROMO"/>
    <property type="match status" value="2"/>
</dbReference>
<dbReference type="SUPFAM" id="SSF47370">
    <property type="entry name" value="Bromodomain"/>
    <property type="match status" value="2"/>
</dbReference>
<dbReference type="PROSITE" id="PS00633">
    <property type="entry name" value="BROMODOMAIN_1"/>
    <property type="match status" value="2"/>
</dbReference>
<dbReference type="PROSITE" id="PS50014">
    <property type="entry name" value="BROMODOMAIN_2"/>
    <property type="match status" value="2"/>
</dbReference>
<dbReference type="PROSITE" id="PS51525">
    <property type="entry name" value="NET"/>
    <property type="match status" value="1"/>
</dbReference>
<comment type="function">
    <text evidence="2">Testis-specific chromatin protein that specifically binds histone H4 acetylated at 'Lys-5' and 'Lys-8' (H4K5ac and H4K8ac, respectively) and plays a key role in spermatogenesis. Required in late pachytene spermatocytes: plays a role in meiotic and post-meiotic cells by binding to acetylated histones at the promoter of specific meiotic and post-meiotic genes, facilitating their activation at the appropriate time. In the post-meiotic phase of spermatogenesis, binds to hyperacetylated histones and participates in their general removal from DNA. Also recognizes and binds a subset of butyrylated histones: able to bind histone H4 butyrylated at 'Lys-8' (H4K8ac), while it is not able to bind H4 butyrylated at 'Lys-5' (H4K5ac).</text>
</comment>
<comment type="subcellular location">
    <subcellularLocation>
        <location evidence="2">Nucleus</location>
    </subcellularLocation>
    <text evidence="2">Detected on chromatin.</text>
</comment>
<comment type="domain">
    <text evidence="2">Bromo domains mediate interaction with histones that have acetylated lysine residues at specific positions. Bromo domain 1 mediates binding with histone H4 acetylated at 'Lys-5' and 'Lys-8' (H4K5ac and H4K8ac, respectively). The bromo domains also recognize and bind a subset of butyrylated histones: able to bind histone H4 butyrylated at 'Lys-8' (H4K8ac), while it is not able to bind H4 butyrylated at 'Lys-5' (H4K5ac).</text>
</comment>
<comment type="similarity">
    <text evidence="7">Belongs to the BET family.</text>
</comment>
<organism>
    <name type="scientific">Danio rerio</name>
    <name type="common">Zebrafish</name>
    <name type="synonym">Brachydanio rerio</name>
    <dbReference type="NCBI Taxonomy" id="7955"/>
    <lineage>
        <taxon>Eukaryota</taxon>
        <taxon>Metazoa</taxon>
        <taxon>Chordata</taxon>
        <taxon>Craniata</taxon>
        <taxon>Vertebrata</taxon>
        <taxon>Euteleostomi</taxon>
        <taxon>Actinopterygii</taxon>
        <taxon>Neopterygii</taxon>
        <taxon>Teleostei</taxon>
        <taxon>Ostariophysi</taxon>
        <taxon>Cypriniformes</taxon>
        <taxon>Danionidae</taxon>
        <taxon>Danioninae</taxon>
        <taxon>Danio</taxon>
    </lineage>
</organism>
<keyword id="KW-0010">Activator</keyword>
<keyword id="KW-0103">Bromodomain</keyword>
<keyword id="KW-0156">Chromatin regulator</keyword>
<keyword id="KW-0175">Coiled coil</keyword>
<keyword id="KW-0221">Differentiation</keyword>
<keyword id="KW-0469">Meiosis</keyword>
<keyword id="KW-0539">Nucleus</keyword>
<keyword id="KW-1185">Reference proteome</keyword>
<keyword id="KW-0677">Repeat</keyword>
<keyword id="KW-0744">Spermatogenesis</keyword>
<keyword id="KW-0804">Transcription</keyword>
<keyword id="KW-0805">Transcription regulation</keyword>
<accession>F1QW93</accession>
<sequence length="918" mass="103105">MSDVKPPQHFTMNGNPPPPEFKNPKKPGRLTNHLQYIEKVVIRALWKHHFSWPFRQPVDAVRLNLPDYYTIIKNPMDLTTIRKRLENNYYWKAMECVEDFNTMFTNCYVYNRPGDDIVLMAQVLEKLFLEKVAEMPEEEYEISALTTKGPVKGARKSTIGLKKRPPSPMSEVVFQQTVTVIPPDALHTIPSAPLSAQLTAKLKNGVKRKADTTTPSASSIPSCESSSCVTEPKVLKLFSRRGSGRPIKPPCKDLPESPPQHQVGRRTKLSERLKYCNAILKEMFSKKHSAYAWPFYKPVDAETLGLLDYHEIIHQPMDMSTIKKKMEAREYTDALQFAADMRLMFSNCYKYNPPGHEVVSMARKLQDVFEFRFSKIPDEPKNANPVSSHNRVKKERARSPSSSESSDSESSSPENSSDTEEEDEEERAHRLASLEEQQLKAVREQLQLLTQTPLSKILKRSSSSKSSGCKVCTMMNSLKKPKFNSVLRRKESRACDSEEEMNTLPMSYEEKRQLSLDINKLPGDKLGKVVNIIKAREPLLRDTDPEEIEIDFETLKPSTLRALECYVVGCLRKKKNKPPKKSKIKEKDKDLQHATGEQNSHKKTKIETDGEIKDTTHPSRLSDSSSSSSSSDSSSSDSSSSDSCDSDSGLTEQKTKRKQSKGPGHANKIKKKKYYPVVPLPEQALRQANAEVKDSSSASGVMCQSRPSSLVSETGSKDLFASQHAKHPVEDITAITGIPPLLSPLTSPSAAMPATGSQSTSSSQFEASSPLCLYKDIVLKHADSWTSLGKLATQTPCTIKSSKESFQQFRKVAMEKELTTASRGLVSKHCLTQQPQKAKLECQPSKPEVESAELPLMAAILDTPKAPEPSSVLQNSVDREREMARKREQERRRREAMSGVIDMTMQRDIMATFEKNLE</sequence>
<name>BRDT_DANRE</name>
<proteinExistence type="inferred from homology"/>
<feature type="chain" id="PRO_0000420475" description="Bromodomain testis-specific protein">
    <location>
        <begin position="1"/>
        <end position="918"/>
    </location>
</feature>
<feature type="domain" description="Bromo 1" evidence="4">
    <location>
        <begin position="29"/>
        <end position="135"/>
    </location>
</feature>
<feature type="domain" description="Bromo 2" evidence="4">
    <location>
        <begin position="267"/>
        <end position="376"/>
    </location>
</feature>
<feature type="domain" description="NET" evidence="5">
    <location>
        <begin position="496"/>
        <end position="578"/>
    </location>
</feature>
<feature type="region of interest" description="Disordered" evidence="6">
    <location>
        <begin position="1"/>
        <end position="26"/>
    </location>
</feature>
<feature type="region of interest" description="Disordered" evidence="6">
    <location>
        <begin position="241"/>
        <end position="267"/>
    </location>
</feature>
<feature type="region of interest" description="Disordered" evidence="6">
    <location>
        <begin position="379"/>
        <end position="430"/>
    </location>
</feature>
<feature type="region of interest" description="Disordered" evidence="6">
    <location>
        <begin position="575"/>
        <end position="712"/>
    </location>
</feature>
<feature type="region of interest" description="Disordered" evidence="6">
    <location>
        <begin position="738"/>
        <end position="764"/>
    </location>
</feature>
<feature type="region of interest" description="Disordered" evidence="6">
    <location>
        <begin position="862"/>
        <end position="899"/>
    </location>
</feature>
<feature type="coiled-coil region" evidence="3">
    <location>
        <begin position="426"/>
        <end position="452"/>
    </location>
</feature>
<feature type="coiled-coil region" evidence="3">
    <location>
        <begin position="815"/>
        <end position="902"/>
    </location>
</feature>
<feature type="short sequence motif" description="Nuclear localization signal" evidence="1">
    <location>
        <begin position="204"/>
        <end position="215"/>
    </location>
</feature>
<feature type="compositionally biased region" description="Low complexity" evidence="6">
    <location>
        <begin position="399"/>
        <end position="416"/>
    </location>
</feature>
<feature type="compositionally biased region" description="Basic residues" evidence="6">
    <location>
        <begin position="575"/>
        <end position="584"/>
    </location>
</feature>
<feature type="compositionally biased region" description="Basic and acidic residues" evidence="6">
    <location>
        <begin position="605"/>
        <end position="617"/>
    </location>
</feature>
<feature type="compositionally biased region" description="Low complexity" evidence="6">
    <location>
        <begin position="622"/>
        <end position="648"/>
    </location>
</feature>
<feature type="compositionally biased region" description="Low complexity" evidence="6">
    <location>
        <begin position="739"/>
        <end position="764"/>
    </location>
</feature>
<feature type="compositionally biased region" description="Basic and acidic residues" evidence="6">
    <location>
        <begin position="877"/>
        <end position="896"/>
    </location>
</feature>
<feature type="site" description="Histone H4K5ac binding" evidence="2">
    <location>
        <position position="111"/>
    </location>
</feature>
<feature type="site" description="Histone H4K5ac binding" evidence="2">
    <location>
        <position position="116"/>
    </location>
</feature>